<proteinExistence type="predicted"/>
<sequence length="126" mass="14167">MTPKPIRVFVYKNLHRTHREGKPWYSVQALEGDFKGRVIHRSGHVLLAHAKGVVRPAGRDKVRRERRKVVHAGIVGELISLLPQDFVGSKIAYNPYENDTFVHANTQAPFLGADRVYLSDSGVRAA</sequence>
<organism>
    <name type="scientific">Mycobacterium phage L5</name>
    <name type="common">Mycobacteriophage L5</name>
    <dbReference type="NCBI Taxonomy" id="31757"/>
    <lineage>
        <taxon>Viruses</taxon>
        <taxon>Duplodnaviria</taxon>
        <taxon>Heunggongvirae</taxon>
        <taxon>Uroviricota</taxon>
        <taxon>Caudoviricetes</taxon>
        <taxon>Fromanvirus</taxon>
    </lineage>
</organism>
<dbReference type="EMBL" id="Z18946">
    <property type="protein sequence ID" value="CAA79458.1"/>
    <property type="molecule type" value="Genomic_DNA"/>
</dbReference>
<dbReference type="PIR" id="S31027">
    <property type="entry name" value="S31027"/>
</dbReference>
<dbReference type="RefSeq" id="NP_039746.1">
    <property type="nucleotide sequence ID" value="NC_001335.1"/>
</dbReference>
<dbReference type="GeneID" id="2942965"/>
<dbReference type="KEGG" id="vg:2942965"/>
<dbReference type="OrthoDB" id="21706at10239"/>
<dbReference type="Proteomes" id="UP000002123">
    <property type="component" value="Genome"/>
</dbReference>
<keyword id="KW-1185">Reference proteome</keyword>
<gene>
    <name type="primary">82</name>
</gene>
<feature type="chain" id="PRO_0000164825" description="Gene 82 protein">
    <location>
        <begin position="1"/>
        <end position="126"/>
    </location>
</feature>
<protein>
    <recommendedName>
        <fullName>Gene 82 protein</fullName>
    </recommendedName>
    <alternativeName>
        <fullName>Gp82</fullName>
    </alternativeName>
</protein>
<reference key="1">
    <citation type="journal article" date="1993" name="Mol. Microbiol.">
        <title>DNA sequence, structure and gene expression of mycobacteriophage L5: a phage system for mycobacterial genetics.</title>
        <authorList>
            <person name="Hatfull G.F."/>
            <person name="Sarkis G.J."/>
        </authorList>
    </citation>
    <scope>NUCLEOTIDE SEQUENCE [LARGE SCALE GENOMIC DNA]</scope>
</reference>
<name>VG82_BPML5</name>
<organismHost>
    <name type="scientific">Mycobacterium</name>
    <dbReference type="NCBI Taxonomy" id="1763"/>
</organismHost>
<accession>Q05298</accession>